<organism>
    <name type="scientific">Xenopus laevis</name>
    <name type="common">African clawed frog</name>
    <dbReference type="NCBI Taxonomy" id="8355"/>
    <lineage>
        <taxon>Eukaryota</taxon>
        <taxon>Metazoa</taxon>
        <taxon>Chordata</taxon>
        <taxon>Craniata</taxon>
        <taxon>Vertebrata</taxon>
        <taxon>Euteleostomi</taxon>
        <taxon>Amphibia</taxon>
        <taxon>Batrachia</taxon>
        <taxon>Anura</taxon>
        <taxon>Pipoidea</taxon>
        <taxon>Pipidae</taxon>
        <taxon>Xenopodinae</taxon>
        <taxon>Xenopus</taxon>
        <taxon>Xenopus</taxon>
    </lineage>
</organism>
<accession>Q5FWQ6</accession>
<feature type="chain" id="PRO_0000242658" description="Dynein assembly factor with WD repeat domains 1">
    <location>
        <begin position="1"/>
        <end position="415"/>
    </location>
</feature>
<feature type="repeat" description="WD 1">
    <location>
        <begin position="90"/>
        <end position="129"/>
    </location>
</feature>
<feature type="repeat" description="WD 2">
    <location>
        <begin position="132"/>
        <end position="174"/>
    </location>
</feature>
<feature type="repeat" description="WD 3">
    <location>
        <begin position="175"/>
        <end position="214"/>
    </location>
</feature>
<feature type="repeat" description="WD 4">
    <location>
        <begin position="217"/>
        <end position="256"/>
    </location>
</feature>
<feature type="repeat" description="WD 5">
    <location>
        <begin position="259"/>
        <end position="298"/>
    </location>
</feature>
<feature type="repeat" description="WD 6">
    <location>
        <begin position="301"/>
        <end position="340"/>
    </location>
</feature>
<feature type="repeat" description="WD 7">
    <location>
        <begin position="343"/>
        <end position="384"/>
    </location>
</feature>
<feature type="repeat" description="WD 8">
    <location>
        <begin position="386"/>
        <end position="415"/>
    </location>
</feature>
<proteinExistence type="evidence at transcript level"/>
<comment type="function">
    <text evidence="2">Required for axonemal dynein assembly and ciliary motility in ciliated organs, including Kupffer's vesicle, during embryogenesis. Facilitates the onset of robust cilia motility during development.</text>
</comment>
<comment type="subcellular location">
    <subcellularLocation>
        <location evidence="1">Cytoplasm</location>
        <location evidence="1">Cytoskeleton</location>
        <location evidence="1">Flagellum basal body</location>
    </subcellularLocation>
    <subcellularLocation>
        <location evidence="1">Cytoplasm</location>
        <location evidence="1">Cytoskeleton</location>
        <location evidence="1">Flagellum axoneme</location>
    </subcellularLocation>
    <text evidence="1">Expression is concentrated at the flagellum basal body but is also detected along the length of the flagellum.</text>
</comment>
<comment type="similarity">
    <text evidence="3">Belongs to the WD repeat WDR69 family.</text>
</comment>
<sequence>MRLKRFLLRYFPPGIILEYEKGGELKTKAIDLLELSPTTDVDLVVGEIQKAEPLITASRTQQVKQLILRLQEKIGQQDSRQFYLFKVLRAHILPLTNVAFNKSGSSFITGSYDRTCKVWDTASGEELHTLEGHRNVVYAIQFNNPYGDKIATGSFDKTCKLWSAETGKCYHTFRGHTAEIVCLVFNPQSTLIATGSMDTTAKLWDIQSGEEALTLSGHAAEIISLSFNTTGDRLITGSFDHTVSVWEIPSGRRIHTLIGHRGEISSAQFNWDCSLIATASMDKSCKLWDSLNGKCVATLTGHDDEVLDVTFDSTGQLVATASADGTARVYSASSRKCLAKLEGHEGEISKICFNAQGNRIVTASSDKTSRLWDPHTGECLQVLKGHTDEIFSCAFNYEGNTIITGSKDNTCRIWR</sequence>
<evidence type="ECO:0000250" key="1">
    <source>
        <dbReference type="UniProtKB" id="Q3Y8L7"/>
    </source>
</evidence>
<evidence type="ECO:0000250" key="2">
    <source>
        <dbReference type="UniProtKB" id="Q8N136"/>
    </source>
</evidence>
<evidence type="ECO:0000305" key="3"/>
<keyword id="KW-0966">Cell projection</keyword>
<keyword id="KW-0969">Cilium</keyword>
<keyword id="KW-0963">Cytoplasm</keyword>
<keyword id="KW-0206">Cytoskeleton</keyword>
<keyword id="KW-0282">Flagellum</keyword>
<keyword id="KW-1185">Reference proteome</keyword>
<keyword id="KW-0677">Repeat</keyword>
<keyword id="KW-0853">WD repeat</keyword>
<protein>
    <recommendedName>
        <fullName>Dynein assembly factor with WD repeat domains 1</fullName>
    </recommendedName>
    <alternativeName>
        <fullName>Outer row dynein assembly protein 16 homolog</fullName>
    </alternativeName>
    <alternativeName>
        <fullName>WD repeat-containing protein 69</fullName>
    </alternativeName>
</protein>
<gene>
    <name type="primary">daw1</name>
    <name type="synonym">wdr69</name>
</gene>
<reference key="1">
    <citation type="submission" date="2005-01" db="EMBL/GenBank/DDBJ databases">
        <authorList>
            <consortium name="NIH - Xenopus Gene Collection (XGC) project"/>
        </authorList>
    </citation>
    <scope>NUCLEOTIDE SEQUENCE [LARGE SCALE MRNA]</scope>
    <source>
        <tissue>Egg</tissue>
    </source>
</reference>
<name>DAW1_XENLA</name>
<dbReference type="EMBL" id="BC089247">
    <property type="protein sequence ID" value="AAH89247.1"/>
    <property type="molecule type" value="mRNA"/>
</dbReference>
<dbReference type="RefSeq" id="NP_001089233.1">
    <property type="nucleotide sequence ID" value="NM_001095764.1"/>
</dbReference>
<dbReference type="SMR" id="Q5FWQ6"/>
<dbReference type="DNASU" id="734280"/>
<dbReference type="GeneID" id="734280"/>
<dbReference type="KEGG" id="xla:734280"/>
<dbReference type="AGR" id="Xenbase:XB-GENE-5802553"/>
<dbReference type="CTD" id="734280"/>
<dbReference type="Xenbase" id="XB-GENE-5802553">
    <property type="gene designation" value="daw1.S"/>
</dbReference>
<dbReference type="OrthoDB" id="674604at2759"/>
<dbReference type="Proteomes" id="UP000186698">
    <property type="component" value="Chromosome 5S"/>
</dbReference>
<dbReference type="Bgee" id="734280">
    <property type="expression patterns" value="Expressed in testis and 19 other cell types or tissues"/>
</dbReference>
<dbReference type="GO" id="GO:0036064">
    <property type="term" value="C:ciliary basal body"/>
    <property type="evidence" value="ECO:0000250"/>
    <property type="project" value="UniProtKB"/>
</dbReference>
<dbReference type="GO" id="GO:0005929">
    <property type="term" value="C:cilium"/>
    <property type="evidence" value="ECO:0000250"/>
    <property type="project" value="UniProtKB"/>
</dbReference>
<dbReference type="GO" id="GO:0005737">
    <property type="term" value="C:cytoplasm"/>
    <property type="evidence" value="ECO:0007669"/>
    <property type="project" value="UniProtKB-KW"/>
</dbReference>
<dbReference type="GO" id="GO:0031514">
    <property type="term" value="C:motile cilium"/>
    <property type="evidence" value="ECO:0007669"/>
    <property type="project" value="UniProtKB-KW"/>
</dbReference>
<dbReference type="GO" id="GO:0042073">
    <property type="term" value="P:intraciliary transport"/>
    <property type="evidence" value="ECO:0000250"/>
    <property type="project" value="UniProtKB"/>
</dbReference>
<dbReference type="GO" id="GO:0036158">
    <property type="term" value="P:outer dynein arm assembly"/>
    <property type="evidence" value="ECO:0000250"/>
    <property type="project" value="UniProtKB"/>
</dbReference>
<dbReference type="CDD" id="cd00200">
    <property type="entry name" value="WD40"/>
    <property type="match status" value="1"/>
</dbReference>
<dbReference type="FunFam" id="2.130.10.10:FF:000227">
    <property type="entry name" value="Dynein assembly factor with WDR repeat domains 1"/>
    <property type="match status" value="1"/>
</dbReference>
<dbReference type="FunFam" id="2.130.10.10:FF:000250">
    <property type="entry name" value="Dynein assembly factor with WDR repeat domains 1"/>
    <property type="match status" value="1"/>
</dbReference>
<dbReference type="Gene3D" id="2.130.10.10">
    <property type="entry name" value="YVTN repeat-like/Quinoprotein amine dehydrogenase"/>
    <property type="match status" value="4"/>
</dbReference>
<dbReference type="InterPro" id="IPR020472">
    <property type="entry name" value="G-protein_beta_WD-40_rep"/>
</dbReference>
<dbReference type="InterPro" id="IPR015943">
    <property type="entry name" value="WD40/YVTN_repeat-like_dom_sf"/>
</dbReference>
<dbReference type="InterPro" id="IPR019775">
    <property type="entry name" value="WD40_repeat_CS"/>
</dbReference>
<dbReference type="InterPro" id="IPR036322">
    <property type="entry name" value="WD40_repeat_dom_sf"/>
</dbReference>
<dbReference type="InterPro" id="IPR001680">
    <property type="entry name" value="WD40_rpt"/>
</dbReference>
<dbReference type="PANTHER" id="PTHR19848:SF8">
    <property type="entry name" value="F-BOX AND WD REPEAT DOMAIN CONTAINING 7"/>
    <property type="match status" value="1"/>
</dbReference>
<dbReference type="PANTHER" id="PTHR19848">
    <property type="entry name" value="WD40 REPEAT PROTEIN"/>
    <property type="match status" value="1"/>
</dbReference>
<dbReference type="Pfam" id="PF00400">
    <property type="entry name" value="WD40"/>
    <property type="match status" value="8"/>
</dbReference>
<dbReference type="PRINTS" id="PR00320">
    <property type="entry name" value="GPROTEINBRPT"/>
</dbReference>
<dbReference type="SMART" id="SM00320">
    <property type="entry name" value="WD40"/>
    <property type="match status" value="8"/>
</dbReference>
<dbReference type="SUPFAM" id="SSF50978">
    <property type="entry name" value="WD40 repeat-like"/>
    <property type="match status" value="1"/>
</dbReference>
<dbReference type="PROSITE" id="PS00678">
    <property type="entry name" value="WD_REPEATS_1"/>
    <property type="match status" value="3"/>
</dbReference>
<dbReference type="PROSITE" id="PS50082">
    <property type="entry name" value="WD_REPEATS_2"/>
    <property type="match status" value="8"/>
</dbReference>
<dbReference type="PROSITE" id="PS50294">
    <property type="entry name" value="WD_REPEATS_REGION"/>
    <property type="match status" value="1"/>
</dbReference>